<protein>
    <recommendedName>
        <fullName>Endochitinase 1</fullName>
        <ecNumber>3.2.1.14</ecNumber>
    </recommendedName>
</protein>
<sequence>MSFRALSVFSLFLSYLILGSAEQCGRQAGGALCPGGLCCSQFGWCGNTDDYCKKENGCQSQCSGSGGDTGGLDSLITRERFDQMLLHRNDGGCPARGFYTYDAFIAAAKSFPAFATTGDDATRKREVAAFLAQTSHETTGGAGWAAPDGPYTWGYCYNRELNPADYCQWDPNYPCAPGKQYFGRGPMQLTWNYNYGQCGRAIGVDLLNNPDLLATDPTISFKSAFWFWMTPQSPKPSCHDVIIGAWSPSGSDQAAGRVPGFGLITNIINGGLECGQGWNAKVEDRIGFYKRYCDTLGVGYGNNLDCYNQRSYNNGPSVDSM</sequence>
<reference key="1">
    <citation type="online journal article" date="1995" name="Plant Gene Register">
        <title>A genomic clone from Theobroma cacao L. with high similarity to plant class I endochitinase sequences.</title>
        <authorList>
            <person name="Snyder-Leiby T.E."/>
            <person name="Furtek D.B."/>
        </authorList>
        <locator>PGR95-056</locator>
    </citation>
    <scope>NUCLEOTIDE SEQUENCE [GENOMIC DNA]</scope>
</reference>
<evidence type="ECO:0000250" key="1"/>
<evidence type="ECO:0000250" key="2">
    <source>
        <dbReference type="UniProtKB" id="P29022"/>
    </source>
</evidence>
<evidence type="ECO:0000255" key="3"/>
<evidence type="ECO:0000255" key="4">
    <source>
        <dbReference type="PROSITE-ProRule" id="PRU00261"/>
    </source>
</evidence>
<evidence type="ECO:0000305" key="5"/>
<name>CHI1_THECC</name>
<accession>Q41596</accession>
<organism>
    <name type="scientific">Theobroma cacao</name>
    <name type="common">Cacao</name>
    <name type="synonym">Cocoa</name>
    <dbReference type="NCBI Taxonomy" id="3641"/>
    <lineage>
        <taxon>Eukaryota</taxon>
        <taxon>Viridiplantae</taxon>
        <taxon>Streptophyta</taxon>
        <taxon>Embryophyta</taxon>
        <taxon>Tracheophyta</taxon>
        <taxon>Spermatophyta</taxon>
        <taxon>Magnoliopsida</taxon>
        <taxon>eudicotyledons</taxon>
        <taxon>Gunneridae</taxon>
        <taxon>Pentapetalae</taxon>
        <taxon>rosids</taxon>
        <taxon>malvids</taxon>
        <taxon>Malvales</taxon>
        <taxon>Malvaceae</taxon>
        <taxon>Byttnerioideae</taxon>
        <taxon>Theobroma</taxon>
    </lineage>
</organism>
<comment type="function">
    <text>Defense against chitin-containing fungal pathogens.</text>
</comment>
<comment type="catalytic activity">
    <reaction>
        <text>Random endo-hydrolysis of N-acetyl-beta-D-glucosaminide (1-&gt;4)-beta-linkages in chitin and chitodextrins.</text>
        <dbReference type="EC" id="3.2.1.14"/>
    </reaction>
</comment>
<comment type="subcellular location">
    <subcellularLocation>
        <location evidence="1">Vacuole</location>
    </subcellularLocation>
    <text evidence="1">Vacuolar and protoplast.</text>
</comment>
<comment type="induction">
    <text>In response to infection, elicitor, ethylene, wounding.</text>
</comment>
<comment type="similarity">
    <text evidence="5">Belongs to the glycosyl hydrolase 19 family. Chitinase class I subfamily.</text>
</comment>
<feature type="signal peptide" evidence="3">
    <location>
        <begin position="1"/>
        <end position="21"/>
    </location>
</feature>
<feature type="chain" id="PRO_0000005329" description="Endochitinase 1">
    <location>
        <begin position="22"/>
        <end position="321"/>
    </location>
</feature>
<feature type="domain" description="Chitin-binding type-1" evidence="4">
    <location>
        <begin position="22"/>
        <end position="64"/>
    </location>
</feature>
<feature type="region of interest" description="Hinge">
    <location>
        <begin position="65"/>
        <end position="98"/>
    </location>
</feature>
<feature type="region of interest" description="Catalytic">
    <location>
        <begin position="99"/>
        <end position="321"/>
    </location>
</feature>
<feature type="active site" description="Proton donor" evidence="2">
    <location>
        <position position="137"/>
    </location>
</feature>
<feature type="disulfide bond" evidence="4">
    <location>
        <begin position="24"/>
        <end position="39"/>
    </location>
</feature>
<feature type="disulfide bond" evidence="4">
    <location>
        <begin position="33"/>
        <end position="45"/>
    </location>
</feature>
<feature type="disulfide bond" evidence="4">
    <location>
        <begin position="38"/>
        <end position="52"/>
    </location>
</feature>
<feature type="disulfide bond" evidence="4">
    <location>
        <begin position="58"/>
        <end position="62"/>
    </location>
</feature>
<feature type="disulfide bond" evidence="4">
    <location>
        <begin position="93"/>
        <end position="156"/>
    </location>
</feature>
<feature type="disulfide bond" evidence="4">
    <location>
        <begin position="167"/>
        <end position="175"/>
    </location>
</feature>
<feature type="disulfide bond" evidence="4">
    <location>
        <begin position="274"/>
        <end position="306"/>
    </location>
</feature>
<keyword id="KW-0119">Carbohydrate metabolism</keyword>
<keyword id="KW-0146">Chitin degradation</keyword>
<keyword id="KW-0147">Chitin-binding</keyword>
<keyword id="KW-1015">Disulfide bond</keyword>
<keyword id="KW-0326">Glycosidase</keyword>
<keyword id="KW-0378">Hydrolase</keyword>
<keyword id="KW-0611">Plant defense</keyword>
<keyword id="KW-0624">Polysaccharide degradation</keyword>
<keyword id="KW-0732">Signal</keyword>
<keyword id="KW-0926">Vacuole</keyword>
<dbReference type="EC" id="3.2.1.14"/>
<dbReference type="EMBL" id="U30324">
    <property type="protein sequence ID" value="AAA80656.1"/>
    <property type="molecule type" value="Genomic_DNA"/>
</dbReference>
<dbReference type="SMR" id="Q41596"/>
<dbReference type="CAZy" id="CBM18">
    <property type="family name" value="Carbohydrate-Binding Module Family 18"/>
</dbReference>
<dbReference type="CAZy" id="GH19">
    <property type="family name" value="Glycoside Hydrolase Family 19"/>
</dbReference>
<dbReference type="eggNOG" id="KOG4742">
    <property type="taxonomic scope" value="Eukaryota"/>
</dbReference>
<dbReference type="Proteomes" id="UP000694886">
    <property type="component" value="Unplaced"/>
</dbReference>
<dbReference type="GO" id="GO:0005773">
    <property type="term" value="C:vacuole"/>
    <property type="evidence" value="ECO:0007669"/>
    <property type="project" value="UniProtKB-SubCell"/>
</dbReference>
<dbReference type="GO" id="GO:0008061">
    <property type="term" value="F:chitin binding"/>
    <property type="evidence" value="ECO:0007669"/>
    <property type="project" value="UniProtKB-KW"/>
</dbReference>
<dbReference type="GO" id="GO:0008843">
    <property type="term" value="F:endochitinase activity"/>
    <property type="evidence" value="ECO:0007669"/>
    <property type="project" value="UniProtKB-EC"/>
</dbReference>
<dbReference type="GO" id="GO:0016998">
    <property type="term" value="P:cell wall macromolecule catabolic process"/>
    <property type="evidence" value="ECO:0007669"/>
    <property type="project" value="InterPro"/>
</dbReference>
<dbReference type="GO" id="GO:0006032">
    <property type="term" value="P:chitin catabolic process"/>
    <property type="evidence" value="ECO:0007669"/>
    <property type="project" value="UniProtKB-KW"/>
</dbReference>
<dbReference type="GO" id="GO:0006952">
    <property type="term" value="P:defense response"/>
    <property type="evidence" value="ECO:0007669"/>
    <property type="project" value="UniProtKB-KW"/>
</dbReference>
<dbReference type="GO" id="GO:0000272">
    <property type="term" value="P:polysaccharide catabolic process"/>
    <property type="evidence" value="ECO:0007669"/>
    <property type="project" value="UniProtKB-KW"/>
</dbReference>
<dbReference type="CDD" id="cd00325">
    <property type="entry name" value="chitinase_GH19"/>
    <property type="match status" value="1"/>
</dbReference>
<dbReference type="CDD" id="cd06921">
    <property type="entry name" value="ChtBD1_GH19_hevein"/>
    <property type="match status" value="1"/>
</dbReference>
<dbReference type="FunFam" id="3.30.60.10:FF:000001">
    <property type="entry name" value="Basic endochitinase"/>
    <property type="match status" value="1"/>
</dbReference>
<dbReference type="FunFam" id="3.30.20.10:FF:000001">
    <property type="entry name" value="Endochitinase (Chitinase)"/>
    <property type="match status" value="1"/>
</dbReference>
<dbReference type="Gene3D" id="1.10.530.10">
    <property type="match status" value="1"/>
</dbReference>
<dbReference type="Gene3D" id="3.30.20.10">
    <property type="entry name" value="Endochitinase, domain 2"/>
    <property type="match status" value="1"/>
</dbReference>
<dbReference type="Gene3D" id="3.30.60.10">
    <property type="entry name" value="Endochitinase-like"/>
    <property type="match status" value="1"/>
</dbReference>
<dbReference type="InterPro" id="IPR001002">
    <property type="entry name" value="Chitin-bd_1"/>
</dbReference>
<dbReference type="InterPro" id="IPR018371">
    <property type="entry name" value="Chitin-binding_1_CS"/>
</dbReference>
<dbReference type="InterPro" id="IPR036861">
    <property type="entry name" value="Endochitinase-like_sf"/>
</dbReference>
<dbReference type="InterPro" id="IPR016283">
    <property type="entry name" value="Glyco_hydro_19"/>
</dbReference>
<dbReference type="InterPro" id="IPR000726">
    <property type="entry name" value="Glyco_hydro_19_cat"/>
</dbReference>
<dbReference type="InterPro" id="IPR023346">
    <property type="entry name" value="Lysozyme-like_dom_sf"/>
</dbReference>
<dbReference type="PANTHER" id="PTHR22595">
    <property type="entry name" value="CHITINASE-RELATED"/>
    <property type="match status" value="1"/>
</dbReference>
<dbReference type="PANTHER" id="PTHR22595:SF200">
    <property type="entry name" value="ENDOCHITINASE 1"/>
    <property type="match status" value="1"/>
</dbReference>
<dbReference type="Pfam" id="PF00187">
    <property type="entry name" value="Chitin_bind_1"/>
    <property type="match status" value="1"/>
</dbReference>
<dbReference type="Pfam" id="PF00182">
    <property type="entry name" value="Glyco_hydro_19"/>
    <property type="match status" value="1"/>
</dbReference>
<dbReference type="PIRSF" id="PIRSF001060">
    <property type="entry name" value="Endochitinase"/>
    <property type="match status" value="1"/>
</dbReference>
<dbReference type="PRINTS" id="PR00451">
    <property type="entry name" value="CHITINBINDNG"/>
</dbReference>
<dbReference type="SMART" id="SM00270">
    <property type="entry name" value="ChtBD1"/>
    <property type="match status" value="1"/>
</dbReference>
<dbReference type="SUPFAM" id="SSF53955">
    <property type="entry name" value="Lysozyme-like"/>
    <property type="match status" value="1"/>
</dbReference>
<dbReference type="SUPFAM" id="SSF57016">
    <property type="entry name" value="Plant lectins/antimicrobial peptides"/>
    <property type="match status" value="1"/>
</dbReference>
<dbReference type="PROSITE" id="PS00026">
    <property type="entry name" value="CHIT_BIND_I_1"/>
    <property type="match status" value="1"/>
</dbReference>
<dbReference type="PROSITE" id="PS50941">
    <property type="entry name" value="CHIT_BIND_I_2"/>
    <property type="match status" value="1"/>
</dbReference>
<dbReference type="PROSITE" id="PS00773">
    <property type="entry name" value="CHITINASE_19_1"/>
    <property type="match status" value="1"/>
</dbReference>
<dbReference type="PROSITE" id="PS00774">
    <property type="entry name" value="CHITINASE_19_2"/>
    <property type="match status" value="1"/>
</dbReference>
<proteinExistence type="evidence at transcript level"/>
<gene>
    <name type="primary">CHIA1</name>
</gene>